<comment type="function">
    <text>Thionins are small plant proteins which are toxic to animal cells. They seem to exert their toxic effect at the level of the cell membrane. Their precise function is not known.</text>
</comment>
<comment type="subcellular location">
    <subcellularLocation>
        <location evidence="2">Secreted</location>
    </subcellularLocation>
</comment>
<comment type="similarity">
    <text evidence="4">Belongs to the plant thionin (TC 1.C.44) family.</text>
</comment>
<proteinExistence type="evidence at protein level"/>
<sequence>KSCCPSTTARNIYNTCRLTGASRSVCASLSGCKIISGSTCDSGWNH</sequence>
<feature type="chain" id="PRO_0000221487" description="Ligatoxin-B" evidence="2">
    <location>
        <begin position="1"/>
        <end position="46"/>
    </location>
</feature>
<feature type="disulfide bond" evidence="1">
    <location>
        <begin position="3"/>
        <end position="40"/>
    </location>
</feature>
<feature type="disulfide bond" evidence="1">
    <location>
        <begin position="4"/>
        <end position="32"/>
    </location>
</feature>
<feature type="disulfide bond" evidence="1">
    <location>
        <begin position="16"/>
        <end position="26"/>
    </location>
</feature>
<reference key="1">
    <citation type="journal article" date="2002" name="Biochem. J.">
        <title>Ligatoxin B, a new cytotoxic protein with a novel helix-turn-helix DNA-binding domain from the mistletoe Phoradendron liga.</title>
        <authorList>
            <person name="Li S.S."/>
            <person name="Gullbo J."/>
            <person name="Lindholm P."/>
            <person name="Larsson R."/>
            <person name="Thunberg E."/>
            <person name="Samuelsson G."/>
            <person name="Bohlin L."/>
            <person name="Claeson P."/>
        </authorList>
    </citation>
    <scope>PROTEIN SEQUENCE</scope>
    <scope>SUBCELLULAR LOCATION</scope>
</reference>
<keyword id="KW-0903">Direct protein sequencing</keyword>
<keyword id="KW-1015">Disulfide bond</keyword>
<keyword id="KW-0611">Plant defense</keyword>
<keyword id="KW-0964">Secreted</keyword>
<keyword id="KW-0800">Toxin</keyword>
<name>THNB_PHOLI</name>
<dbReference type="SMR" id="P59358"/>
<dbReference type="GO" id="GO:0005576">
    <property type="term" value="C:extracellular region"/>
    <property type="evidence" value="ECO:0007669"/>
    <property type="project" value="UniProtKB-SubCell"/>
</dbReference>
<dbReference type="GO" id="GO:0090729">
    <property type="term" value="F:toxin activity"/>
    <property type="evidence" value="ECO:0007669"/>
    <property type="project" value="UniProtKB-KW"/>
</dbReference>
<dbReference type="GO" id="GO:0006952">
    <property type="term" value="P:defense response"/>
    <property type="evidence" value="ECO:0007669"/>
    <property type="project" value="UniProtKB-KW"/>
</dbReference>
<dbReference type="FunFam" id="3.30.1350.10:FF:000001">
    <property type="entry name" value="Hellethionin-D"/>
    <property type="match status" value="1"/>
</dbReference>
<dbReference type="Gene3D" id="3.30.1350.10">
    <property type="entry name" value="Thionin-like"/>
    <property type="match status" value="1"/>
</dbReference>
<dbReference type="InterPro" id="IPR001010">
    <property type="entry name" value="Thionin"/>
</dbReference>
<dbReference type="InterPro" id="IPR036391">
    <property type="entry name" value="Thionin-like_sf"/>
</dbReference>
<dbReference type="PANTHER" id="PTHR33920">
    <property type="entry name" value="THIONIN-2.1-RELATED"/>
    <property type="match status" value="1"/>
</dbReference>
<dbReference type="PANTHER" id="PTHR33920:SF2">
    <property type="entry name" value="THIONIN-2.1-RELATED"/>
    <property type="match status" value="1"/>
</dbReference>
<dbReference type="Pfam" id="PF00321">
    <property type="entry name" value="Thionin"/>
    <property type="match status" value="1"/>
</dbReference>
<dbReference type="PRINTS" id="PR00287">
    <property type="entry name" value="THIONIN"/>
</dbReference>
<dbReference type="SUPFAM" id="SSF57429">
    <property type="entry name" value="Crambin-like"/>
    <property type="match status" value="1"/>
</dbReference>
<dbReference type="PROSITE" id="PS00271">
    <property type="entry name" value="THIONIN"/>
    <property type="match status" value="1"/>
</dbReference>
<protein>
    <recommendedName>
        <fullName evidence="3">Ligatoxin-B</fullName>
    </recommendedName>
</protein>
<organism>
    <name type="scientific">Phoradendron liga</name>
    <name type="common">Argentine mistletoe</name>
    <name type="synonym">Viscum liga</name>
    <dbReference type="NCBI Taxonomy" id="3968"/>
    <lineage>
        <taxon>Eukaryota</taxon>
        <taxon>Viridiplantae</taxon>
        <taxon>Streptophyta</taxon>
        <taxon>Embryophyta</taxon>
        <taxon>Tracheophyta</taxon>
        <taxon>Spermatophyta</taxon>
        <taxon>Magnoliopsida</taxon>
        <taxon>eudicotyledons</taxon>
        <taxon>Gunneridae</taxon>
        <taxon>Pentapetalae</taxon>
        <taxon>Santalales</taxon>
        <taxon>Viscaceae</taxon>
        <taxon>Phoradendron</taxon>
    </lineage>
</organism>
<accession>P59358</accession>
<evidence type="ECO:0000250" key="1">
    <source>
        <dbReference type="UniProtKB" id="P01539"/>
    </source>
</evidence>
<evidence type="ECO:0000269" key="2">
    <source>
    </source>
</evidence>
<evidence type="ECO:0000303" key="3">
    <source>
    </source>
</evidence>
<evidence type="ECO:0000305" key="4"/>